<name>CFTR_HORSE</name>
<keyword id="KW-0067">ATP-binding</keyword>
<keyword id="KW-1003">Cell membrane</keyword>
<keyword id="KW-0868">Chloride</keyword>
<keyword id="KW-0869">Chloride channel</keyword>
<keyword id="KW-0256">Endoplasmic reticulum</keyword>
<keyword id="KW-0967">Endosome</keyword>
<keyword id="KW-0325">Glycoprotein</keyword>
<keyword id="KW-0407">Ion channel</keyword>
<keyword id="KW-0406">Ion transport</keyword>
<keyword id="KW-0413">Isomerase</keyword>
<keyword id="KW-1017">Isopeptide bond</keyword>
<keyword id="KW-0449">Lipoprotein</keyword>
<keyword id="KW-0472">Membrane</keyword>
<keyword id="KW-0547">Nucleotide-binding</keyword>
<keyword id="KW-0539">Nucleus</keyword>
<keyword id="KW-0564">Palmitate</keyword>
<keyword id="KW-0597">Phosphoprotein</keyword>
<keyword id="KW-1185">Reference proteome</keyword>
<keyword id="KW-0677">Repeat</keyword>
<keyword id="KW-0812">Transmembrane</keyword>
<keyword id="KW-1133">Transmembrane helix</keyword>
<keyword id="KW-0813">Transport</keyword>
<keyword id="KW-0832">Ubl conjugation</keyword>
<feature type="chain" id="PRO_0000226368" description="Cystic fibrosis transmembrane conductance regulator">
    <location>
        <begin position="1"/>
        <end position="1481"/>
    </location>
</feature>
<feature type="topological domain" description="Cytoplasmic" evidence="1">
    <location>
        <begin position="1"/>
        <end position="77"/>
    </location>
</feature>
<feature type="transmembrane region" description="Helical; Name=1" evidence="1">
    <location>
        <begin position="78"/>
        <end position="98"/>
    </location>
</feature>
<feature type="topological domain" description="Extracellular" evidence="1">
    <location>
        <begin position="99"/>
        <end position="122"/>
    </location>
</feature>
<feature type="transmembrane region" description="Helical; Name=2" evidence="1">
    <location>
        <begin position="123"/>
        <end position="146"/>
    </location>
</feature>
<feature type="topological domain" description="Cytoplasmic" evidence="1">
    <location>
        <begin position="147"/>
        <end position="195"/>
    </location>
</feature>
<feature type="transmembrane region" description="Helical; Name=3" evidence="1">
    <location>
        <begin position="196"/>
        <end position="216"/>
    </location>
</feature>
<feature type="topological domain" description="Extracellular" evidence="1">
    <location>
        <begin position="217"/>
        <end position="222"/>
    </location>
</feature>
<feature type="transmembrane region" description="Helical; Name=4" evidence="1">
    <location>
        <begin position="223"/>
        <end position="243"/>
    </location>
</feature>
<feature type="topological domain" description="Cytoplasmic" evidence="1">
    <location>
        <begin position="244"/>
        <end position="298"/>
    </location>
</feature>
<feature type="transmembrane region" description="Helical; Name=5" evidence="1">
    <location>
        <begin position="299"/>
        <end position="319"/>
    </location>
</feature>
<feature type="topological domain" description="Extracellular" evidence="1">
    <location>
        <begin position="320"/>
        <end position="339"/>
    </location>
</feature>
<feature type="transmembrane region" description="Helical; Name=6" evidence="1">
    <location>
        <begin position="340"/>
        <end position="358"/>
    </location>
</feature>
<feature type="topological domain" description="Cytoplasmic" evidence="1">
    <location>
        <begin position="359"/>
        <end position="858"/>
    </location>
</feature>
<feature type="transmembrane region" description="Helical; Name=7" evidence="1">
    <location>
        <begin position="859"/>
        <end position="879"/>
    </location>
</feature>
<feature type="topological domain" description="Extracellular" evidence="1">
    <location>
        <begin position="880"/>
        <end position="918"/>
    </location>
</feature>
<feature type="transmembrane region" description="Discontinuously helical; Name=8" evidence="1">
    <location>
        <begin position="919"/>
        <end position="939"/>
    </location>
</feature>
<feature type="topological domain" description="Cytoplasmic" evidence="1">
    <location>
        <begin position="940"/>
        <end position="990"/>
    </location>
</feature>
<feature type="transmembrane region" description="Helical; Name=9" evidence="1">
    <location>
        <begin position="991"/>
        <end position="1011"/>
    </location>
</feature>
<feature type="topological domain" description="Extracellular" evidence="1">
    <location>
        <begin position="1012"/>
        <end position="1013"/>
    </location>
</feature>
<feature type="transmembrane region" description="Helical; Name=10" evidence="1">
    <location>
        <begin position="1014"/>
        <end position="1034"/>
    </location>
</feature>
<feature type="topological domain" description="Cytoplasmic" evidence="1">
    <location>
        <begin position="1035"/>
        <end position="1095"/>
    </location>
</feature>
<feature type="transmembrane region" description="Helical; Name=11" evidence="1">
    <location>
        <begin position="1096"/>
        <end position="1116"/>
    </location>
</feature>
<feature type="topological domain" description="Extracellular" evidence="1">
    <location>
        <begin position="1117"/>
        <end position="1130"/>
    </location>
</feature>
<feature type="transmembrane region" description="Helical; Name=12" evidence="1">
    <location>
        <begin position="1131"/>
        <end position="1151"/>
    </location>
</feature>
<feature type="topological domain" description="Cytoplasmic" evidence="1">
    <location>
        <begin position="1152"/>
        <end position="1481"/>
    </location>
</feature>
<feature type="domain" description="ABC transmembrane type-1 1" evidence="6">
    <location>
        <begin position="81"/>
        <end position="365"/>
    </location>
</feature>
<feature type="domain" description="ABC transporter 1" evidence="5">
    <location>
        <begin position="422"/>
        <end position="645"/>
    </location>
</feature>
<feature type="domain" description="ABC transmembrane type-1 2" evidence="6">
    <location>
        <begin position="859"/>
        <end position="1155"/>
    </location>
</feature>
<feature type="domain" description="ABC transporter 2" evidence="5">
    <location>
        <begin position="1211"/>
        <end position="1444"/>
    </location>
</feature>
<feature type="region of interest" description="Disordered R region" evidence="1">
    <location>
        <begin position="653"/>
        <end position="831"/>
    </location>
</feature>
<feature type="region of interest" description="Interaction with GORASP2" evidence="1">
    <location>
        <begin position="1387"/>
        <end position="1481"/>
    </location>
</feature>
<feature type="region of interest" description="Disordered" evidence="7">
    <location>
        <begin position="1449"/>
        <end position="1481"/>
    </location>
</feature>
<feature type="short sequence motif" description="PDZ-binding" evidence="1">
    <location>
        <begin position="1479"/>
        <end position="1481"/>
    </location>
</feature>
<feature type="compositionally biased region" description="Basic residues" evidence="7">
    <location>
        <begin position="1451"/>
        <end position="1463"/>
    </location>
</feature>
<feature type="compositionally biased region" description="Acidic residues" evidence="7">
    <location>
        <begin position="1470"/>
        <end position="1481"/>
    </location>
</feature>
<feature type="binding site" evidence="1">
    <location>
        <position position="401"/>
    </location>
    <ligand>
        <name>ATP</name>
        <dbReference type="ChEBI" id="CHEBI:30616"/>
        <label>1</label>
    </ligand>
</feature>
<feature type="binding site" evidence="1">
    <location>
        <position position="433"/>
    </location>
    <ligand>
        <name>ATP</name>
        <dbReference type="ChEBI" id="CHEBI:30616"/>
        <label>1</label>
    </ligand>
</feature>
<feature type="binding site" evidence="5">
    <location>
        <begin position="457"/>
        <end position="464"/>
    </location>
    <ligand>
        <name>ATP</name>
        <dbReference type="ChEBI" id="CHEBI:30616"/>
        <label>1</label>
    </ligand>
</feature>
<feature type="binding site" evidence="2">
    <location>
        <position position="492"/>
    </location>
    <ligand>
        <name>ATP</name>
        <dbReference type="ChEBI" id="CHEBI:30616"/>
        <label>1</label>
    </ligand>
</feature>
<feature type="binding site" evidence="1">
    <location>
        <position position="1220"/>
    </location>
    <ligand>
        <name>ATP</name>
        <dbReference type="ChEBI" id="CHEBI:30616"/>
        <label>2</label>
    </ligand>
</feature>
<feature type="binding site" evidence="5">
    <location>
        <begin position="1245"/>
        <end position="1252"/>
    </location>
    <ligand>
        <name>ATP</name>
        <dbReference type="ChEBI" id="CHEBI:30616"/>
        <label>2</label>
    </ligand>
</feature>
<feature type="modified residue" description="Phosphoserine" evidence="1">
    <location>
        <position position="548"/>
    </location>
</feature>
<feature type="modified residue" description="Phosphoserine" evidence="1">
    <location>
        <position position="659"/>
    </location>
</feature>
<feature type="modified residue" description="Phosphoserine; by PKA" evidence="1">
    <location>
        <position position="669"/>
    </location>
</feature>
<feature type="modified residue" description="Phosphoserine" evidence="1">
    <location>
        <position position="685"/>
    </location>
</feature>
<feature type="modified residue" description="Phosphoserine" evidence="1">
    <location>
        <position position="699"/>
    </location>
</feature>
<feature type="modified residue" description="Phosphoserine" evidence="1">
    <location>
        <position position="711"/>
    </location>
</feature>
<feature type="modified residue" description="Phosphothreonine" evidence="1">
    <location>
        <position position="716"/>
    </location>
</feature>
<feature type="modified residue" description="Phosphoserine" evidence="1">
    <location>
        <position position="736"/>
    </location>
</feature>
<feature type="modified residue" description="Phosphoserine" evidence="1">
    <location>
        <position position="767"/>
    </location>
</feature>
<feature type="modified residue" description="Phosphoserine" evidence="1">
    <location>
        <position position="790"/>
    </location>
</feature>
<feature type="modified residue" description="Phosphoserine" evidence="1">
    <location>
        <position position="795"/>
    </location>
</feature>
<feature type="modified residue" description="Phosphoserine" evidence="1">
    <location>
        <position position="813"/>
    </location>
</feature>
<feature type="modified residue" description="Phosphoserine" evidence="1">
    <location>
        <position position="1445"/>
    </location>
</feature>
<feature type="modified residue" description="Phosphoserine" evidence="1">
    <location>
        <position position="1457"/>
    </location>
</feature>
<feature type="lipid moiety-binding region" description="S-palmitoyl cysteine" evidence="1">
    <location>
        <position position="523"/>
    </location>
</feature>
<feature type="lipid moiety-binding region" description="S-palmitoyl cysteine" evidence="1">
    <location>
        <position position="1396"/>
    </location>
</feature>
<feature type="glycosylation site" description="N-linked (GlcNAc...) asparagine" evidence="4">
    <location>
        <position position="894"/>
    </location>
</feature>
<feature type="glycosylation site" description="N-linked (GlcNAc...) asparagine" evidence="4">
    <location>
        <position position="900"/>
    </location>
</feature>
<feature type="cross-link" description="Glycyl lysine isopeptide (Lys-Gly) (interchain with G-Cter in ubiquitin)" evidence="1">
    <location>
        <position position="687"/>
    </location>
</feature>
<dbReference type="EC" id="5.6.1.6" evidence="1"/>
<dbReference type="EMBL" id="DP000020">
    <property type="protein sequence ID" value="ABB89806.1"/>
    <property type="molecule type" value="Genomic_DNA"/>
</dbReference>
<dbReference type="RefSeq" id="NP_001103980.1">
    <property type="nucleotide sequence ID" value="NM_001110510.1"/>
</dbReference>
<dbReference type="SMR" id="Q2QLA3"/>
<dbReference type="FunCoup" id="Q2QLA3">
    <property type="interactions" value="154"/>
</dbReference>
<dbReference type="STRING" id="9796.ENSECAP00000008319"/>
<dbReference type="GlyCosmos" id="Q2QLA3">
    <property type="glycosylation" value="2 sites, No reported glycans"/>
</dbReference>
<dbReference type="PaxDb" id="9796-ENSECAP00000008319"/>
<dbReference type="Ensembl" id="ENSECAT00000010680.2">
    <property type="protein sequence ID" value="ENSECAP00000008270.2"/>
    <property type="gene ID" value="ENSECAG00000009139.4"/>
</dbReference>
<dbReference type="GeneID" id="100071259"/>
<dbReference type="KEGG" id="ecb:100071259"/>
<dbReference type="CTD" id="1080"/>
<dbReference type="VGNC" id="VGNC:16468">
    <property type="gene designation" value="CFTR"/>
</dbReference>
<dbReference type="GeneTree" id="ENSGT00940000158567"/>
<dbReference type="HOGENOM" id="CLU_000604_27_1_1"/>
<dbReference type="InParanoid" id="Q2QLA3"/>
<dbReference type="OrthoDB" id="6500128at2759"/>
<dbReference type="Proteomes" id="UP000002281">
    <property type="component" value="Chromosome 4"/>
</dbReference>
<dbReference type="Bgee" id="ENSECAG00000009139">
    <property type="expression patterns" value="Expressed in oviduct epithelium and 8 other cell types or tissues"/>
</dbReference>
<dbReference type="ExpressionAtlas" id="Q2QLA3">
    <property type="expression patterns" value="baseline"/>
</dbReference>
<dbReference type="GO" id="GO:0016324">
    <property type="term" value="C:apical plasma membrane"/>
    <property type="evidence" value="ECO:0000250"/>
    <property type="project" value="UniProtKB"/>
</dbReference>
<dbReference type="GO" id="GO:0034707">
    <property type="term" value="C:chloride channel complex"/>
    <property type="evidence" value="ECO:0007669"/>
    <property type="project" value="UniProtKB-KW"/>
</dbReference>
<dbReference type="GO" id="GO:0005829">
    <property type="term" value="C:cytosol"/>
    <property type="evidence" value="ECO:0000318"/>
    <property type="project" value="GO_Central"/>
</dbReference>
<dbReference type="GO" id="GO:0005769">
    <property type="term" value="C:early endosome"/>
    <property type="evidence" value="ECO:0000250"/>
    <property type="project" value="UniProtKB"/>
</dbReference>
<dbReference type="GO" id="GO:0031901">
    <property type="term" value="C:early endosome membrane"/>
    <property type="evidence" value="ECO:0007669"/>
    <property type="project" value="UniProtKB-SubCell"/>
</dbReference>
<dbReference type="GO" id="GO:0005789">
    <property type="term" value="C:endoplasmic reticulum membrane"/>
    <property type="evidence" value="ECO:0000250"/>
    <property type="project" value="UniProtKB"/>
</dbReference>
<dbReference type="GO" id="GO:0016020">
    <property type="term" value="C:membrane"/>
    <property type="evidence" value="ECO:0000250"/>
    <property type="project" value="UniProtKB"/>
</dbReference>
<dbReference type="GO" id="GO:0005634">
    <property type="term" value="C:nucleus"/>
    <property type="evidence" value="ECO:0000250"/>
    <property type="project" value="UniProtKB"/>
</dbReference>
<dbReference type="GO" id="GO:0005886">
    <property type="term" value="C:plasma membrane"/>
    <property type="evidence" value="ECO:0000250"/>
    <property type="project" value="UniProtKB"/>
</dbReference>
<dbReference type="GO" id="GO:0055038">
    <property type="term" value="C:recycling endosome membrane"/>
    <property type="evidence" value="ECO:0007669"/>
    <property type="project" value="UniProtKB-SubCell"/>
</dbReference>
<dbReference type="GO" id="GO:0140359">
    <property type="term" value="F:ABC-type transporter activity"/>
    <property type="evidence" value="ECO:0007669"/>
    <property type="project" value="InterPro"/>
</dbReference>
<dbReference type="GO" id="GO:0005524">
    <property type="term" value="F:ATP binding"/>
    <property type="evidence" value="ECO:0007669"/>
    <property type="project" value="UniProtKB-KW"/>
</dbReference>
<dbReference type="GO" id="GO:0016887">
    <property type="term" value="F:ATP hydrolysis activity"/>
    <property type="evidence" value="ECO:0000250"/>
    <property type="project" value="UniProtKB"/>
</dbReference>
<dbReference type="GO" id="GO:0042626">
    <property type="term" value="F:ATPase-coupled transmembrane transporter activity"/>
    <property type="evidence" value="ECO:0000318"/>
    <property type="project" value="GO_Central"/>
</dbReference>
<dbReference type="GO" id="GO:0015106">
    <property type="term" value="F:bicarbonate transmembrane transporter activity"/>
    <property type="evidence" value="ECO:0000250"/>
    <property type="project" value="UniProtKB"/>
</dbReference>
<dbReference type="GO" id="GO:0005254">
    <property type="term" value="F:chloride channel activity"/>
    <property type="evidence" value="ECO:0000250"/>
    <property type="project" value="UniProtKB"/>
</dbReference>
<dbReference type="GO" id="GO:0019869">
    <property type="term" value="F:chloride channel inhibitor activity"/>
    <property type="evidence" value="ECO:0000250"/>
    <property type="project" value="UniProtKB"/>
</dbReference>
<dbReference type="GO" id="GO:0015108">
    <property type="term" value="F:chloride transmembrane transporter activity"/>
    <property type="evidence" value="ECO:0000250"/>
    <property type="project" value="UniProtKB"/>
</dbReference>
<dbReference type="GO" id="GO:0005260">
    <property type="term" value="F:intracellularly ATP-gated chloride channel activity"/>
    <property type="evidence" value="ECO:0000250"/>
    <property type="project" value="UniProtKB"/>
</dbReference>
<dbReference type="GO" id="GO:0015701">
    <property type="term" value="P:bicarbonate transport"/>
    <property type="evidence" value="ECO:0000250"/>
    <property type="project" value="UniProtKB"/>
</dbReference>
<dbReference type="GO" id="GO:0071320">
    <property type="term" value="P:cellular response to cAMP"/>
    <property type="evidence" value="ECO:0000250"/>
    <property type="project" value="UniProtKB"/>
</dbReference>
<dbReference type="GO" id="GO:1904322">
    <property type="term" value="P:cellular response to forskolin"/>
    <property type="evidence" value="ECO:0000250"/>
    <property type="project" value="UniProtKB"/>
</dbReference>
<dbReference type="GO" id="GO:1902476">
    <property type="term" value="P:chloride transmembrane transport"/>
    <property type="evidence" value="ECO:0000250"/>
    <property type="project" value="UniProtKB"/>
</dbReference>
<dbReference type="GO" id="GO:0051454">
    <property type="term" value="P:intracellular pH elevation"/>
    <property type="evidence" value="ECO:0000250"/>
    <property type="project" value="UniProtKB"/>
</dbReference>
<dbReference type="GO" id="GO:0060081">
    <property type="term" value="P:membrane hyperpolarization"/>
    <property type="evidence" value="ECO:0000250"/>
    <property type="project" value="UniProtKB"/>
</dbReference>
<dbReference type="GO" id="GO:0050891">
    <property type="term" value="P:multicellular organismal-level water homeostasis"/>
    <property type="evidence" value="ECO:0000250"/>
    <property type="project" value="UniProtKB"/>
</dbReference>
<dbReference type="GO" id="GO:0034976">
    <property type="term" value="P:response to endoplasmic reticulum stress"/>
    <property type="evidence" value="ECO:0000250"/>
    <property type="project" value="UniProtKB"/>
</dbReference>
<dbReference type="GO" id="GO:0048240">
    <property type="term" value="P:sperm capacitation"/>
    <property type="evidence" value="ECO:0000250"/>
    <property type="project" value="UniProtKB"/>
</dbReference>
<dbReference type="GO" id="GO:0035377">
    <property type="term" value="P:transepithelial water transport"/>
    <property type="evidence" value="ECO:0000250"/>
    <property type="project" value="UniProtKB"/>
</dbReference>
<dbReference type="CDD" id="cd18594">
    <property type="entry name" value="ABC_6TM_CFTR_D1"/>
    <property type="match status" value="1"/>
</dbReference>
<dbReference type="CDD" id="cd18600">
    <property type="entry name" value="ABC_6TM_CFTR_D2"/>
    <property type="match status" value="1"/>
</dbReference>
<dbReference type="CDD" id="cd03291">
    <property type="entry name" value="ABCC_CFTR1"/>
    <property type="match status" value="1"/>
</dbReference>
<dbReference type="CDD" id="cd03289">
    <property type="entry name" value="ABCC_CFTR2"/>
    <property type="match status" value="1"/>
</dbReference>
<dbReference type="FunFam" id="1.20.1560.10:FF:000017">
    <property type="entry name" value="Cystic fibrosis transmembrane conductance regulator"/>
    <property type="match status" value="1"/>
</dbReference>
<dbReference type="FunFam" id="1.20.1560.10:FF:000019">
    <property type="entry name" value="Cystic fibrosis transmembrane conductance regulator"/>
    <property type="match status" value="1"/>
</dbReference>
<dbReference type="FunFam" id="3.40.50.300:FF:000581">
    <property type="entry name" value="Cystic fibrosis transmembrane conductance regulator"/>
    <property type="match status" value="1"/>
</dbReference>
<dbReference type="FunFam" id="3.40.50.300:FF:000591">
    <property type="entry name" value="Cystic fibrosis transmembrane conductance regulator"/>
    <property type="match status" value="1"/>
</dbReference>
<dbReference type="Gene3D" id="1.20.1560.10">
    <property type="entry name" value="ABC transporter type 1, transmembrane domain"/>
    <property type="match status" value="2"/>
</dbReference>
<dbReference type="Gene3D" id="3.40.50.300">
    <property type="entry name" value="P-loop containing nucleotide triphosphate hydrolases"/>
    <property type="match status" value="2"/>
</dbReference>
<dbReference type="InterPro" id="IPR003593">
    <property type="entry name" value="AAA+_ATPase"/>
</dbReference>
<dbReference type="InterPro" id="IPR011527">
    <property type="entry name" value="ABC1_TM_dom"/>
</dbReference>
<dbReference type="InterPro" id="IPR036640">
    <property type="entry name" value="ABC1_TM_sf"/>
</dbReference>
<dbReference type="InterPro" id="IPR003439">
    <property type="entry name" value="ABC_transporter-like_ATP-bd"/>
</dbReference>
<dbReference type="InterPro" id="IPR017871">
    <property type="entry name" value="ABC_transporter-like_CS"/>
</dbReference>
<dbReference type="InterPro" id="IPR050173">
    <property type="entry name" value="ABC_transporter_C-like"/>
</dbReference>
<dbReference type="InterPro" id="IPR009147">
    <property type="entry name" value="CFTR/ABCC7"/>
</dbReference>
<dbReference type="InterPro" id="IPR047082">
    <property type="entry name" value="CFTR1_ATP-bd_dom1"/>
</dbReference>
<dbReference type="InterPro" id="IPR025837">
    <property type="entry name" value="CFTR_reg_dom"/>
</dbReference>
<dbReference type="InterPro" id="IPR027417">
    <property type="entry name" value="P-loop_NTPase"/>
</dbReference>
<dbReference type="NCBIfam" id="TIGR01271">
    <property type="entry name" value="CFTR_protein"/>
    <property type="match status" value="1"/>
</dbReference>
<dbReference type="PANTHER" id="PTHR24223">
    <property type="entry name" value="ATP-BINDING CASSETTE SUB-FAMILY C"/>
    <property type="match status" value="1"/>
</dbReference>
<dbReference type="PANTHER" id="PTHR24223:SF19">
    <property type="entry name" value="CYSTIC FIBROSIS TRANSMEMBRANE CONDUCTANCE REGULATOR"/>
    <property type="match status" value="1"/>
</dbReference>
<dbReference type="Pfam" id="PF00664">
    <property type="entry name" value="ABC_membrane"/>
    <property type="match status" value="2"/>
</dbReference>
<dbReference type="Pfam" id="PF00005">
    <property type="entry name" value="ABC_tran"/>
    <property type="match status" value="2"/>
</dbReference>
<dbReference type="Pfam" id="PF14396">
    <property type="entry name" value="CFTR_R"/>
    <property type="match status" value="1"/>
</dbReference>
<dbReference type="PRINTS" id="PR01851">
    <property type="entry name" value="CYSFIBREGLTR"/>
</dbReference>
<dbReference type="SMART" id="SM00382">
    <property type="entry name" value="AAA"/>
    <property type="match status" value="2"/>
</dbReference>
<dbReference type="SUPFAM" id="SSF90123">
    <property type="entry name" value="ABC transporter transmembrane region"/>
    <property type="match status" value="2"/>
</dbReference>
<dbReference type="SUPFAM" id="SSF52540">
    <property type="entry name" value="P-loop containing nucleoside triphosphate hydrolases"/>
    <property type="match status" value="2"/>
</dbReference>
<dbReference type="PROSITE" id="PS50929">
    <property type="entry name" value="ABC_TM1F"/>
    <property type="match status" value="2"/>
</dbReference>
<dbReference type="PROSITE" id="PS00211">
    <property type="entry name" value="ABC_TRANSPORTER_1"/>
    <property type="match status" value="1"/>
</dbReference>
<dbReference type="PROSITE" id="PS50893">
    <property type="entry name" value="ABC_TRANSPORTER_2"/>
    <property type="match status" value="2"/>
</dbReference>
<reference key="1">
    <citation type="submission" date="2005-11" db="EMBL/GenBank/DDBJ databases">
        <title>NISC comparative sequencing initiative.</title>
        <authorList>
            <person name="Antonellis A."/>
            <person name="Ayele K."/>
            <person name="Benjamin B."/>
            <person name="Blakesley R.W."/>
            <person name="Boakye A."/>
            <person name="Bouffard G.G."/>
            <person name="Brinkley C."/>
            <person name="Brooks S."/>
            <person name="Chu G."/>
            <person name="Coleman H."/>
            <person name="Engle J."/>
            <person name="Gestole M."/>
            <person name="Greene A."/>
            <person name="Guan X."/>
            <person name="Gupta J."/>
            <person name="Haghighi P."/>
            <person name="Han J."/>
            <person name="Hansen N."/>
            <person name="Ho S.-L."/>
            <person name="Hu P."/>
            <person name="Hunter G."/>
            <person name="Hurle B."/>
            <person name="Idol J.R."/>
            <person name="Kwong P."/>
            <person name="Laric P."/>
            <person name="Larson S."/>
            <person name="Lee-Lin S.-Q."/>
            <person name="Legaspi R."/>
            <person name="Madden M."/>
            <person name="Maduro Q.L."/>
            <person name="Maduro V.B."/>
            <person name="Margulies E.H."/>
            <person name="Masiello C."/>
            <person name="Maskeri B."/>
            <person name="McDowell J."/>
            <person name="Mojidi H.A."/>
            <person name="Mullikin J.C."/>
            <person name="Oestreicher J.S."/>
            <person name="Park M."/>
            <person name="Portnoy M.E."/>
            <person name="Prasad A."/>
            <person name="Puri O."/>
            <person name="Reddix-Dugue N."/>
            <person name="Schandler K."/>
            <person name="Schueler M.G."/>
            <person name="Sison C."/>
            <person name="Stantripop S."/>
            <person name="Stephen E."/>
            <person name="Taye A."/>
            <person name="Thomas J.W."/>
            <person name="Thomas P.J."/>
            <person name="Tsipouri V."/>
            <person name="Ung L."/>
            <person name="Vogt J.L."/>
            <person name="Wetherby K.D."/>
            <person name="Young A."/>
            <person name="Green E.D."/>
        </authorList>
    </citation>
    <scope>NUCLEOTIDE SEQUENCE [LARGE SCALE GENOMIC DNA]</scope>
</reference>
<accession>Q2QLA3</accession>
<protein>
    <recommendedName>
        <fullName evidence="1">Cystic fibrosis transmembrane conductance regulator</fullName>
        <shortName>CFTR</shortName>
    </recommendedName>
    <alternativeName>
        <fullName>ATP-binding cassette sub-family C member 7</fullName>
    </alternativeName>
    <alternativeName>
        <fullName>Channel conductance-controlling ATPase</fullName>
        <ecNumber evidence="1">5.6.1.6</ecNumber>
    </alternativeName>
    <alternativeName>
        <fullName>cAMP-dependent chloride channel</fullName>
    </alternativeName>
</protein>
<proteinExistence type="inferred from homology"/>
<evidence type="ECO:0000250" key="1">
    <source>
        <dbReference type="UniProtKB" id="P13569"/>
    </source>
</evidence>
<evidence type="ECO:0000250" key="2">
    <source>
        <dbReference type="UniProtKB" id="P26361"/>
    </source>
</evidence>
<evidence type="ECO:0000250" key="3">
    <source>
        <dbReference type="UniProtKB" id="P34158"/>
    </source>
</evidence>
<evidence type="ECO:0000255" key="4"/>
<evidence type="ECO:0000255" key="5">
    <source>
        <dbReference type="PROSITE-ProRule" id="PRU00434"/>
    </source>
</evidence>
<evidence type="ECO:0000255" key="6">
    <source>
        <dbReference type="PROSITE-ProRule" id="PRU00441"/>
    </source>
</evidence>
<evidence type="ECO:0000256" key="7">
    <source>
        <dbReference type="SAM" id="MobiDB-lite"/>
    </source>
</evidence>
<evidence type="ECO:0000305" key="8"/>
<comment type="function">
    <text evidence="1 2">Epithelial ion channel that plays an important role in the regulation of epithelial ion and water transport and fluid homeostasis. Mediates the transport of chloride ions across the cell membrane (By similarity). Possesses an intrinsic ATPase activity and utilizes ATP to gate its channel; the passive flow of anions through the channel is gated by cycles of ATP binding and hydrolysis by the ATP-binding domains (By similarity). The ion channel is also permeable to HCO(3)(-); selectivity depends on the extracellular chloride concentration. Exerts its function also by modulating the activity of other ion channels and transporters. Contributes to the regulation of the pH and the ion content of the epithelial fluid layer. Modulates the activity of the epithelial sodium channel (ENaC) complex, in part by regulating the cell surface expression of the ENaC complex. May regulate bicarbonate secretion and salvage in epithelial cells by regulating the transporter SLC4A7. Can inhibit the chloride channel activity of ANO1 (By similarity). Plays a role in the chloride and bicarbonate homeostasis during sperm epididymal maturation and capacitation (By similarity).</text>
</comment>
<comment type="catalytic activity">
    <reaction evidence="1">
        <text>ATP + H2O + closed Cl(-) channel = ADP + phosphate + open Cl(-) channel.</text>
        <dbReference type="EC" id="5.6.1.6"/>
    </reaction>
</comment>
<comment type="catalytic activity">
    <reaction evidence="1">
        <text>chloride(in) = chloride(out)</text>
        <dbReference type="Rhea" id="RHEA:29823"/>
        <dbReference type="ChEBI" id="CHEBI:17996"/>
    </reaction>
</comment>
<comment type="catalytic activity">
    <reaction evidence="1">
        <text>hydrogencarbonate(in) = hydrogencarbonate(out)</text>
        <dbReference type="Rhea" id="RHEA:28695"/>
        <dbReference type="ChEBI" id="CHEBI:17544"/>
    </reaction>
</comment>
<comment type="catalytic activity">
    <reaction evidence="1">
        <text>ATP + H2O = ADP + phosphate + H(+)</text>
        <dbReference type="Rhea" id="RHEA:13065"/>
        <dbReference type="ChEBI" id="CHEBI:15377"/>
        <dbReference type="ChEBI" id="CHEBI:15378"/>
        <dbReference type="ChEBI" id="CHEBI:30616"/>
        <dbReference type="ChEBI" id="CHEBI:43474"/>
        <dbReference type="ChEBI" id="CHEBI:456216"/>
    </reaction>
    <physiologicalReaction direction="left-to-right" evidence="1">
        <dbReference type="Rhea" id="RHEA:13066"/>
    </physiologicalReaction>
</comment>
<comment type="subunit">
    <text evidence="1 2 3">Monomer; does not require oligomerization for channel activity. May form oligomers in the membrane (By similarity). Interacts with SLC26A3, SLC26A6 and NHERF1 (By similarity). Interacts with SHANK2 (By similarity). Interacts with MYO6 (By similarity). Interacts (via C-terminus) with GOPC (via PDZ domain); this promotes CFTR internalization and thereby decreases channel activity. Interacts with SLC4A7 through NHERF1. Found in a complex with MYO5B and RAB11A. Interacts with ANO1. Interacts with SLC26A8 (By similarity). Interacts with AHCYL1; the interaction increases CFTR activity (By similarity). Interacts with CSE1L (By similarity). The core-glycosylated form interacts with GORASP2 (via PDZ GRASP-type 1 domain) in respone to ER stress (By similarity). Interacts with MARCHF2; the interaction leads to CFTR ubiqtuitination and degradation (By similarity). Interacts with ADGRG2 (By similarity).</text>
</comment>
<comment type="subcellular location">
    <subcellularLocation>
        <location evidence="2">Apical cell membrane</location>
        <topology evidence="1">Multi-pass membrane protein</topology>
    </subcellularLocation>
    <subcellularLocation>
        <location evidence="1">Early endosome membrane</location>
        <topology evidence="1">Multi-pass membrane protein</topology>
    </subcellularLocation>
    <subcellularLocation>
        <location evidence="2">Cell membrane</location>
        <topology evidence="1">Multi-pass membrane protein</topology>
    </subcellularLocation>
    <subcellularLocation>
        <location evidence="1">Recycling endosome membrane</location>
        <topology evidence="1">Multi-pass membrane protein</topology>
    </subcellularLocation>
    <subcellularLocation>
        <location evidence="1">Endoplasmic reticulum membrane</location>
        <topology evidence="1">Multi-pass membrane protein</topology>
    </subcellularLocation>
    <subcellularLocation>
        <location evidence="3">Nucleus</location>
    </subcellularLocation>
    <text evidence="1 3">The channel is internalized from the cell surface into an endosomal recycling compartment, from where it is recycled to the cell membrane. In the oviduct and bronchus, detected on the apical side of epithelial cells, but not associated with cilia. In Sertoli cells, a processed product is detected in the nucleus. ER stress induces GORASP2-mediated unconventional (ER/Golgi-independent) trafficking of core-glycosylated CFTR to cell membrane.</text>
</comment>
<comment type="domain">
    <text evidence="1 2">Binds and hydrolyzes ATP via the two cytoplasmic ABC transporter nucleotide-binding domains. The two ATP-binding domains interact with each other, forming a head-to-tail dimer. Normal ATPase activity requires interaction between the two domains. The first ABC transporter nucleotide-binding domain has no ATPase activity by itself.</text>
</comment>
<comment type="domain">
    <text evidence="1">The PDZ-binding motif mediates interactions with GOPC and with the SLC4A7, NHERF1/EBP50 complex.</text>
</comment>
<comment type="domain">
    <text evidence="1">The disordered R region mediates channel activation when it is phosphorylated, but not in the absence of phosphorylation.</text>
</comment>
<comment type="PTM">
    <text evidence="1">N-glycosylated.</text>
</comment>
<comment type="PTM">
    <text evidence="1">Phosphorylated; cAMP treatment promotes phosphorylation and activates the channel. Dephosphorylation decreases the ATPase activity (in vitro). Phosphorylation at PKA sites activates the channel. Phosphorylation at PKC sites enhances the response to phosphorylation by PKA. Phosphorylated by AMPK; this inhibits channel activity.</text>
</comment>
<comment type="PTM">
    <text evidence="1">Ubiquitinated, leading to its degradation in the lysosome. Deubiquitination by USP10 in early endosomes enhances its endocytic recycling to the cell membrane. Ubiquitinated by RNF185 during ER stress. Ubiquitinated by MARCHF2 (By similarity).</text>
</comment>
<comment type="similarity">
    <text evidence="8">Belongs to the ABC transporter superfamily. ABCC family. CFTR transporter (TC 3.A.1.202) subfamily.</text>
</comment>
<sequence>MQRSPLEKASVISKLFFSWTRPILRKGYRQRLELSDIYQIPSADSADNLSEKLEREWDRELVSKKNPKLINALRRCFFWRFMFYGIILYLGEVTKAVQPLLLGRIIASYDPDNEAERSIAIYLGIGLCLLFIVRTLLLHPAIFGLHHIGMQMRIAMFSLIYKKTLKLSSRVLDKISIGQLVSLLSNNLNKFDEGLALAHFVWIAPLQVTLLMGLLWDLLQASAFCGLAFLIVLALFQAGLGRMMMKYRDQRAGKINERLVITSEMIENIQSVKAYCWEEAMEKMIENLRQTELKLTRKAAYVRYFNSSAFFFSGFFVVFLSVLPYALIKGIVLRRIFTTISFCIVLRMAVTRQFPWAVQTWYDSLGAINKIQDFLQKQEYKTLEYNLTTTEVVMENVTAFWEEGFGELFEKAKQNNDRKISNGDNSLFFSNFSLLGTPVLKDISFKIERGQLLAVAGSTGAGKTSLLMMIMGELEPSEGKIKHSGRISFCSQFSWIMPGTIKENIIFGVSYDEYRYRSVIKACQLEEDISKFAEKDNIVLGEGGIQLSGGQRARISLARAVYKDADLYLLDSPFGYLDVLTEKEIFESCVCKLMANKTRILVTSKMEHLKKADKILILHEGSSYFYGTFSELQNLRPDFSSKLMGYDSFDQFSAERRNSILTETLRRFSLEGDATVSWNETKKQSFKQTGEFGDKRKNSILNPINSIRKFSIVQKTPLQMNGIEEDSDEPLERRLSLVPDSEQGEAILPRSNVINTGPTFQRRRRQSVLNLMTRSSVNQGQSIHRKTATSTRKMSLAPQANLTEMDIYSRRLSQDSGLEISEEINEDDLKECFFDDVESIPTVTTWNTYLRYITIHKSLIFVLIWCLVIFLAEVAASLVVLWLLKETPPQDSGNSTKGANNSYAVIITSTSSYYVFYIYVGVADTLLALGLFRGLPLVHTLITVSKILHHKMLHSVLQAPMSTLNTLKAGGILNRFSKDMAILDDLLPLTIFDFIQLLLIVIGAVAVVSVLQPYIFLATVPVIAAFIILRAYFLHTSQQLKQLESEGRSPIFTHLVTSLKGLWTLRAFGRQPYFETLFHKALNLHTANWFLYLSTLRWFQMRIEMIFVIFFIAVTFISILTTGEGEGTVGIILTLAMNIMSTLQWAVNSSIDVDSLMRSVSRVFKFIDMPTEDSKPTKSVKPSKDGQLSKVMIIENQYVKKDDIWPSGGQMTVKDLTAKYTDGGNAILENISFSISPGQRVGLLGRTGSGKSTLLSAFLRLLNTEGEIQIDGVSWDSITLQQWRKAFGVIPQKVFIFSGTFRKNLDPYGQWNDQEIWKVADEVGLRSVIEQFPGKLDFVLVDGGNVLSHGHKQLICLARSVLSKAKILLLDEPSAHLDPITYQIIRRTLKQAFADCTVILSEHRIEAMLECQRFLVIEENKVRQYDSIQKLLSEKSLFQQAISSSDPLKLFPHRNSSKHKSRSKIAALQEETEEEVQETRL</sequence>
<gene>
    <name evidence="1" type="primary">CFTR</name>
    <name type="synonym">ABCC7</name>
</gene>
<organism>
    <name type="scientific">Equus caballus</name>
    <name type="common">Horse</name>
    <dbReference type="NCBI Taxonomy" id="9796"/>
    <lineage>
        <taxon>Eukaryota</taxon>
        <taxon>Metazoa</taxon>
        <taxon>Chordata</taxon>
        <taxon>Craniata</taxon>
        <taxon>Vertebrata</taxon>
        <taxon>Euteleostomi</taxon>
        <taxon>Mammalia</taxon>
        <taxon>Eutheria</taxon>
        <taxon>Laurasiatheria</taxon>
        <taxon>Perissodactyla</taxon>
        <taxon>Equidae</taxon>
        <taxon>Equus</taxon>
    </lineage>
</organism>